<feature type="chain" id="PRO_0000225110" description="UDP-N-acetylglucosamine--N-acetylmuramyl-(pentapeptide) pyrophosphoryl-undecaprenol N-acetylglucosamine transferase">
    <location>
        <begin position="1"/>
        <end position="391"/>
    </location>
</feature>
<feature type="binding site" evidence="1">
    <location>
        <begin position="11"/>
        <end position="13"/>
    </location>
    <ligand>
        <name>UDP-N-acetyl-alpha-D-glucosamine</name>
        <dbReference type="ChEBI" id="CHEBI:57705"/>
    </ligand>
</feature>
<feature type="binding site" evidence="1">
    <location>
        <position position="176"/>
    </location>
    <ligand>
        <name>UDP-N-acetyl-alpha-D-glucosamine</name>
        <dbReference type="ChEBI" id="CHEBI:57705"/>
    </ligand>
</feature>
<feature type="binding site" evidence="1">
    <location>
        <position position="206"/>
    </location>
    <ligand>
        <name>UDP-N-acetyl-alpha-D-glucosamine</name>
        <dbReference type="ChEBI" id="CHEBI:57705"/>
    </ligand>
</feature>
<feature type="binding site" evidence="1">
    <location>
        <position position="312"/>
    </location>
    <ligand>
        <name>UDP-N-acetyl-alpha-D-glucosamine</name>
        <dbReference type="ChEBI" id="CHEBI:57705"/>
    </ligand>
</feature>
<accession>Q73L91</accession>
<proteinExistence type="inferred from homology"/>
<keyword id="KW-0131">Cell cycle</keyword>
<keyword id="KW-0132">Cell division</keyword>
<keyword id="KW-0997">Cell inner membrane</keyword>
<keyword id="KW-1003">Cell membrane</keyword>
<keyword id="KW-0133">Cell shape</keyword>
<keyword id="KW-0961">Cell wall biogenesis/degradation</keyword>
<keyword id="KW-0328">Glycosyltransferase</keyword>
<keyword id="KW-0472">Membrane</keyword>
<keyword id="KW-0573">Peptidoglycan synthesis</keyword>
<keyword id="KW-1185">Reference proteome</keyword>
<keyword id="KW-0808">Transferase</keyword>
<name>MURG_TREDE</name>
<sequence length="391" mass="42630">MKCVVFTGGGTGGHIFPGLAVAEALSSSLECRIVWIGSAKGVDRKIVESSELYSASPSVLEFIGIPAGKLRRYFSFQNFIDVFKVAAGFIKSFFILLKLKPVFVFSKGGFVSVPPCAAAKFLKIPVITHECDFSPGLATRINSKFANRILVSYQETAELLPASLRSKVICTGNPVRLSFYSGRPEKGRSFLNIKSNLPVLFVLGGSLGARQLNDLISDSIEYLVKHFVVVHQIGEANMDQGQKIKEGLLKSSPEFAENYKPYPFIKKEMADVLSLSSIVVSRAGANTVWESAAAGKPMILVPLEKGSSRGDQIENAEFFKKKGSAEILLGEDVRPDIFIRLLRDLGFEENISGNERLKNMAQASAALAGEKPALVIADFLKSFFTSKNEDL</sequence>
<protein>
    <recommendedName>
        <fullName evidence="1">UDP-N-acetylglucosamine--N-acetylmuramyl-(pentapeptide) pyrophosphoryl-undecaprenol N-acetylglucosamine transferase</fullName>
        <ecNumber evidence="1">2.4.1.227</ecNumber>
    </recommendedName>
    <alternativeName>
        <fullName evidence="1">Undecaprenyl-PP-MurNAc-pentapeptide-UDPGlcNAc GlcNAc transferase</fullName>
    </alternativeName>
</protein>
<organism>
    <name type="scientific">Treponema denticola (strain ATCC 35405 / DSM 14222 / CIP 103919 / JCM 8153 / KCTC 15104)</name>
    <dbReference type="NCBI Taxonomy" id="243275"/>
    <lineage>
        <taxon>Bacteria</taxon>
        <taxon>Pseudomonadati</taxon>
        <taxon>Spirochaetota</taxon>
        <taxon>Spirochaetia</taxon>
        <taxon>Spirochaetales</taxon>
        <taxon>Treponemataceae</taxon>
        <taxon>Treponema</taxon>
    </lineage>
</organism>
<comment type="function">
    <text evidence="1">Cell wall formation. Catalyzes the transfer of a GlcNAc subunit on undecaprenyl-pyrophosphoryl-MurNAc-pentapeptide (lipid intermediate I) to form undecaprenyl-pyrophosphoryl-MurNAc-(pentapeptide)GlcNAc (lipid intermediate II).</text>
</comment>
<comment type="catalytic activity">
    <reaction evidence="1">
        <text>di-trans,octa-cis-undecaprenyl diphospho-N-acetyl-alpha-D-muramoyl-L-alanyl-D-glutamyl-meso-2,6-diaminopimeloyl-D-alanyl-D-alanine + UDP-N-acetyl-alpha-D-glucosamine = di-trans,octa-cis-undecaprenyl diphospho-[N-acetyl-alpha-D-glucosaminyl-(1-&gt;4)]-N-acetyl-alpha-D-muramoyl-L-alanyl-D-glutamyl-meso-2,6-diaminopimeloyl-D-alanyl-D-alanine + UDP + H(+)</text>
        <dbReference type="Rhea" id="RHEA:31227"/>
        <dbReference type="ChEBI" id="CHEBI:15378"/>
        <dbReference type="ChEBI" id="CHEBI:57705"/>
        <dbReference type="ChEBI" id="CHEBI:58223"/>
        <dbReference type="ChEBI" id="CHEBI:61387"/>
        <dbReference type="ChEBI" id="CHEBI:61388"/>
        <dbReference type="EC" id="2.4.1.227"/>
    </reaction>
</comment>
<comment type="pathway">
    <text evidence="1">Cell wall biogenesis; peptidoglycan biosynthesis.</text>
</comment>
<comment type="subcellular location">
    <subcellularLocation>
        <location evidence="1">Cell inner membrane</location>
        <topology evidence="1">Peripheral membrane protein</topology>
        <orientation evidence="1">Cytoplasmic side</orientation>
    </subcellularLocation>
</comment>
<comment type="similarity">
    <text evidence="1">Belongs to the glycosyltransferase 28 family. MurG subfamily.</text>
</comment>
<evidence type="ECO:0000255" key="1">
    <source>
        <dbReference type="HAMAP-Rule" id="MF_00033"/>
    </source>
</evidence>
<gene>
    <name evidence="1" type="primary">murG</name>
    <name type="ordered locus">TDE_1974</name>
</gene>
<reference key="1">
    <citation type="journal article" date="2004" name="Proc. Natl. Acad. Sci. U.S.A.">
        <title>Comparison of the genome of the oral pathogen Treponema denticola with other spirochete genomes.</title>
        <authorList>
            <person name="Seshadri R."/>
            <person name="Myers G.S.A."/>
            <person name="Tettelin H."/>
            <person name="Eisen J.A."/>
            <person name="Heidelberg J.F."/>
            <person name="Dodson R.J."/>
            <person name="Davidsen T.M."/>
            <person name="DeBoy R.T."/>
            <person name="Fouts D.E."/>
            <person name="Haft D.H."/>
            <person name="Selengut J."/>
            <person name="Ren Q."/>
            <person name="Brinkac L.M."/>
            <person name="Madupu R."/>
            <person name="Kolonay J.F."/>
            <person name="Durkin S.A."/>
            <person name="Daugherty S.C."/>
            <person name="Shetty J."/>
            <person name="Shvartsbeyn A."/>
            <person name="Gebregeorgis E."/>
            <person name="Geer K."/>
            <person name="Tsegaye G."/>
            <person name="Malek J.A."/>
            <person name="Ayodeji B."/>
            <person name="Shatsman S."/>
            <person name="McLeod M.P."/>
            <person name="Smajs D."/>
            <person name="Howell J.K."/>
            <person name="Pal S."/>
            <person name="Amin A."/>
            <person name="Vashisth P."/>
            <person name="McNeill T.Z."/>
            <person name="Xiang Q."/>
            <person name="Sodergren E."/>
            <person name="Baca E."/>
            <person name="Weinstock G.M."/>
            <person name="Norris S.J."/>
            <person name="Fraser C.M."/>
            <person name="Paulsen I.T."/>
        </authorList>
    </citation>
    <scope>NUCLEOTIDE SEQUENCE [LARGE SCALE GENOMIC DNA]</scope>
    <source>
        <strain>ATCC 35405 / DSM 14222 / CIP 103919 / JCM 8153 / KCTC 15104</strain>
    </source>
</reference>
<dbReference type="EC" id="2.4.1.227" evidence="1"/>
<dbReference type="EMBL" id="AE017226">
    <property type="protein sequence ID" value="AAS12488.1"/>
    <property type="molecule type" value="Genomic_DNA"/>
</dbReference>
<dbReference type="RefSeq" id="NP_972577.1">
    <property type="nucleotide sequence ID" value="NC_002967.9"/>
</dbReference>
<dbReference type="RefSeq" id="WP_010957113.1">
    <property type="nucleotide sequence ID" value="NC_002967.9"/>
</dbReference>
<dbReference type="SMR" id="Q73L91"/>
<dbReference type="STRING" id="243275.TDE_1974"/>
<dbReference type="CAZy" id="GT28">
    <property type="family name" value="Glycosyltransferase Family 28"/>
</dbReference>
<dbReference type="PaxDb" id="243275-TDE_1974"/>
<dbReference type="GeneID" id="2741537"/>
<dbReference type="KEGG" id="tde:TDE_1974"/>
<dbReference type="PATRIC" id="fig|243275.7.peg.1866"/>
<dbReference type="eggNOG" id="COG0707">
    <property type="taxonomic scope" value="Bacteria"/>
</dbReference>
<dbReference type="HOGENOM" id="CLU_037404_0_0_12"/>
<dbReference type="OrthoDB" id="9808936at2"/>
<dbReference type="UniPathway" id="UPA00219"/>
<dbReference type="Proteomes" id="UP000008212">
    <property type="component" value="Chromosome"/>
</dbReference>
<dbReference type="GO" id="GO:0005886">
    <property type="term" value="C:plasma membrane"/>
    <property type="evidence" value="ECO:0007669"/>
    <property type="project" value="UniProtKB-SubCell"/>
</dbReference>
<dbReference type="GO" id="GO:0051991">
    <property type="term" value="F:UDP-N-acetyl-D-glucosamine:N-acetylmuramoyl-L-alanyl-D-glutamyl-meso-2,6-diaminopimelyl-D-alanyl-D-alanine-diphosphoundecaprenol 4-beta-N-acetylglucosaminlytransferase activity"/>
    <property type="evidence" value="ECO:0007669"/>
    <property type="project" value="RHEA"/>
</dbReference>
<dbReference type="GO" id="GO:0050511">
    <property type="term" value="F:undecaprenyldiphospho-muramoylpentapeptide beta-N-acetylglucosaminyltransferase activity"/>
    <property type="evidence" value="ECO:0007669"/>
    <property type="project" value="UniProtKB-UniRule"/>
</dbReference>
<dbReference type="GO" id="GO:0005975">
    <property type="term" value="P:carbohydrate metabolic process"/>
    <property type="evidence" value="ECO:0007669"/>
    <property type="project" value="InterPro"/>
</dbReference>
<dbReference type="GO" id="GO:0051301">
    <property type="term" value="P:cell division"/>
    <property type="evidence" value="ECO:0007669"/>
    <property type="project" value="UniProtKB-KW"/>
</dbReference>
<dbReference type="GO" id="GO:0071555">
    <property type="term" value="P:cell wall organization"/>
    <property type="evidence" value="ECO:0007669"/>
    <property type="project" value="UniProtKB-KW"/>
</dbReference>
<dbReference type="GO" id="GO:0030259">
    <property type="term" value="P:lipid glycosylation"/>
    <property type="evidence" value="ECO:0007669"/>
    <property type="project" value="UniProtKB-UniRule"/>
</dbReference>
<dbReference type="GO" id="GO:0009252">
    <property type="term" value="P:peptidoglycan biosynthetic process"/>
    <property type="evidence" value="ECO:0007669"/>
    <property type="project" value="UniProtKB-UniRule"/>
</dbReference>
<dbReference type="GO" id="GO:0008360">
    <property type="term" value="P:regulation of cell shape"/>
    <property type="evidence" value="ECO:0007669"/>
    <property type="project" value="UniProtKB-KW"/>
</dbReference>
<dbReference type="CDD" id="cd03785">
    <property type="entry name" value="GT28_MurG"/>
    <property type="match status" value="1"/>
</dbReference>
<dbReference type="Gene3D" id="3.40.50.2000">
    <property type="entry name" value="Glycogen Phosphorylase B"/>
    <property type="match status" value="2"/>
</dbReference>
<dbReference type="HAMAP" id="MF_00033">
    <property type="entry name" value="MurG"/>
    <property type="match status" value="1"/>
</dbReference>
<dbReference type="InterPro" id="IPR006009">
    <property type="entry name" value="GlcNAc_MurG"/>
</dbReference>
<dbReference type="InterPro" id="IPR007235">
    <property type="entry name" value="Glyco_trans_28_C"/>
</dbReference>
<dbReference type="InterPro" id="IPR004276">
    <property type="entry name" value="GlycoTrans_28_N"/>
</dbReference>
<dbReference type="NCBIfam" id="TIGR01133">
    <property type="entry name" value="murG"/>
    <property type="match status" value="1"/>
</dbReference>
<dbReference type="PANTHER" id="PTHR21015:SF27">
    <property type="entry name" value="UDP-N-ACETYLGLUCOSAMINE--N-ACETYLMURAMYL-(PENTAPEPTIDE) PYROPHOSPHORYL-UNDECAPRENOL N-ACETYLGLUCOSAMINE TRANSFERASE"/>
    <property type="match status" value="1"/>
</dbReference>
<dbReference type="PANTHER" id="PTHR21015">
    <property type="entry name" value="UDP-N-ACETYLGLUCOSAMINE--N-ACETYLMURAMYL-(PENTAPEPTIDE) PYROPHOSPHORYL-UNDECAPRENOL N-ACETYLGLUCOSAMINE TRANSFERASE 1"/>
    <property type="match status" value="1"/>
</dbReference>
<dbReference type="Pfam" id="PF04101">
    <property type="entry name" value="Glyco_tran_28_C"/>
    <property type="match status" value="1"/>
</dbReference>
<dbReference type="Pfam" id="PF03033">
    <property type="entry name" value="Glyco_transf_28"/>
    <property type="match status" value="1"/>
</dbReference>
<dbReference type="SUPFAM" id="SSF53756">
    <property type="entry name" value="UDP-Glycosyltransferase/glycogen phosphorylase"/>
    <property type="match status" value="1"/>
</dbReference>